<accession>Q503M4</accession>
<sequence length="477" mass="51853">MAQEKKKGGVLPPDGGWGWMIVAGCFVVTVCTRAVTRCISIFFVEFQMHFAKDYSGTAWIHSLVDCTTMLCAPLGSLIGNQLSCRIAVILGGFLASVGLVLSSFATSLEYLYATLGLLTGLGFALCYTPAIAMVGIYFCERKALAYGIAMSGSGIGTFILAPVVQLLIEHYSWRGALLILGGFVLNLCVCGALLRPIILKEEEACPLPVDSECGYSVKPPTLNGGPTRSAASDAKQRCFQSMQEYHFLLMPDFLVLAGSFLLLASGCSLPFVYLVPYALDVGVGHQHAAFLMSILGVIDIVGNITFGWLTDRRCLKKYRNICYMFAVGMEGLCCLFIPLLRTFVWLVPFSVLYGYFDGAYVALIPVVTSDVVGRQYLSSALGVVYFLHAVPYLVSPPIGGWLVDTTGTYTATFFLSGFALISSSLLLFSVAIIRYCQRNQKKNSLSKIPKLVSCEGKQVDYYPPKNKDLMLIIPATS</sequence>
<keyword id="KW-1003">Cell membrane</keyword>
<keyword id="KW-0472">Membrane</keyword>
<keyword id="KW-1185">Reference proteome</keyword>
<keyword id="KW-0812">Transmembrane</keyword>
<keyword id="KW-1133">Transmembrane helix</keyword>
<comment type="function">
    <text evidence="1">Functions as a transporter for creatine and as well for its precursor guanidinoacetate. Transport of creatine and GAA is independent of resting membrane potential and extracellular Na(+), Cl(-), or pH. Contributes to the process of creatine biosynthesis and distribution.</text>
</comment>
<comment type="catalytic activity">
    <reaction evidence="1">
        <text>creatine(in) = creatine(out)</text>
        <dbReference type="Rhea" id="RHEA:73043"/>
        <dbReference type="ChEBI" id="CHEBI:57947"/>
    </reaction>
</comment>
<comment type="catalytic activity">
    <reaction evidence="1">
        <text>guanidinoacetate(in) = guanidinoacetate(out)</text>
        <dbReference type="Rhea" id="RHEA:73047"/>
        <dbReference type="ChEBI" id="CHEBI:57742"/>
    </reaction>
</comment>
<comment type="subcellular location">
    <subcellularLocation>
        <location evidence="1">Cell membrane</location>
        <topology evidence="3">Multi-pass membrane protein</topology>
    </subcellularLocation>
    <subcellularLocation>
        <location evidence="2">Basolateral cell membrane</location>
        <topology evidence="3">Multi-pass membrane protein</topology>
    </subcellularLocation>
</comment>
<comment type="similarity">
    <text evidence="4">Belongs to the major facilitator superfamily. Monocarboxylate porter (TC 2.A.1.13) family.</text>
</comment>
<reference key="1">
    <citation type="submission" date="2005-05" db="EMBL/GenBank/DDBJ databases">
        <authorList>
            <consortium name="NIH - Zebrafish Gene Collection (ZGC) project"/>
        </authorList>
    </citation>
    <scope>NUCLEOTIDE SEQUENCE [LARGE SCALE MRNA]</scope>
    <source>
        <tissue>Olfactory epithelium</tissue>
    </source>
</reference>
<proteinExistence type="evidence at transcript level"/>
<evidence type="ECO:0000250" key="1">
    <source>
        <dbReference type="UniProtKB" id="Q6ZSM3"/>
    </source>
</evidence>
<evidence type="ECO:0000250" key="2">
    <source>
        <dbReference type="UniProtKB" id="Q8BGC3"/>
    </source>
</evidence>
<evidence type="ECO:0000255" key="3"/>
<evidence type="ECO:0000305" key="4"/>
<feature type="chain" id="PRO_0000286966" description="Monocarboxylate transporter 12-B">
    <location>
        <begin position="1"/>
        <end position="477"/>
    </location>
</feature>
<feature type="topological domain" description="Cytoplasmic" evidence="3">
    <location>
        <begin position="1"/>
        <end position="9"/>
    </location>
</feature>
<feature type="transmembrane region" description="Helical" evidence="3">
    <location>
        <begin position="10"/>
        <end position="30"/>
    </location>
</feature>
<feature type="transmembrane region" description="Helical" evidence="3">
    <location>
        <begin position="58"/>
        <end position="78"/>
    </location>
</feature>
<feature type="transmembrane region" description="Helical" evidence="3">
    <location>
        <begin position="86"/>
        <end position="106"/>
    </location>
</feature>
<feature type="transmembrane region" description="Helical" evidence="3">
    <location>
        <begin position="116"/>
        <end position="136"/>
    </location>
</feature>
<feature type="transmembrane region" description="Helical" evidence="3">
    <location>
        <begin position="148"/>
        <end position="168"/>
    </location>
</feature>
<feature type="transmembrane region" description="Helical" evidence="3">
    <location>
        <begin position="178"/>
        <end position="198"/>
    </location>
</feature>
<feature type="transmembrane region" description="Helical" evidence="3">
    <location>
        <begin position="253"/>
        <end position="273"/>
    </location>
</feature>
<feature type="transmembrane region" description="Helical" evidence="3">
    <location>
        <begin position="289"/>
        <end position="309"/>
    </location>
</feature>
<feature type="transmembrane region" description="Helical" evidence="3">
    <location>
        <begin position="320"/>
        <end position="340"/>
    </location>
</feature>
<feature type="transmembrane region" description="Helical" evidence="3">
    <location>
        <begin position="344"/>
        <end position="364"/>
    </location>
</feature>
<feature type="transmembrane region" description="Helical" evidence="3">
    <location>
        <begin position="383"/>
        <end position="403"/>
    </location>
</feature>
<feature type="transmembrane region" description="Helical" evidence="3">
    <location>
        <begin position="413"/>
        <end position="433"/>
    </location>
</feature>
<feature type="topological domain" description="Cytoplasmic" evidence="3">
    <location>
        <begin position="434"/>
        <end position="477"/>
    </location>
</feature>
<name>MT12B_DANRE</name>
<protein>
    <recommendedName>
        <fullName evidence="4">Monocarboxylate transporter 12-B</fullName>
        <shortName evidence="4">MCT 12-B</shortName>
    </recommendedName>
    <alternativeName>
        <fullName>Solute carrier family 16 member 12-B</fullName>
    </alternativeName>
</protein>
<organism>
    <name type="scientific">Danio rerio</name>
    <name type="common">Zebrafish</name>
    <name type="synonym">Brachydanio rerio</name>
    <dbReference type="NCBI Taxonomy" id="7955"/>
    <lineage>
        <taxon>Eukaryota</taxon>
        <taxon>Metazoa</taxon>
        <taxon>Chordata</taxon>
        <taxon>Craniata</taxon>
        <taxon>Vertebrata</taxon>
        <taxon>Euteleostomi</taxon>
        <taxon>Actinopterygii</taxon>
        <taxon>Neopterygii</taxon>
        <taxon>Teleostei</taxon>
        <taxon>Ostariophysi</taxon>
        <taxon>Cypriniformes</taxon>
        <taxon>Danionidae</taxon>
        <taxon>Danioninae</taxon>
        <taxon>Danio</taxon>
    </lineage>
</organism>
<dbReference type="EMBL" id="BC095267">
    <property type="protein sequence ID" value="AAH95267.1"/>
    <property type="molecule type" value="mRNA"/>
</dbReference>
<dbReference type="SMR" id="Q503M4"/>
<dbReference type="FunCoup" id="Q503M4">
    <property type="interactions" value="82"/>
</dbReference>
<dbReference type="STRING" id="7955.ENSDARP00000115335"/>
<dbReference type="PaxDb" id="7955-ENSDARP00000115335"/>
<dbReference type="AGR" id="ZFIN:ZDB-GENE-050522-80"/>
<dbReference type="ZFIN" id="ZDB-GENE-050522-80">
    <property type="gene designation" value="slc16a12b"/>
</dbReference>
<dbReference type="eggNOG" id="KOG2504">
    <property type="taxonomic scope" value="Eukaryota"/>
</dbReference>
<dbReference type="InParanoid" id="Q503M4"/>
<dbReference type="OrthoDB" id="6499973at2759"/>
<dbReference type="PhylomeDB" id="Q503M4"/>
<dbReference type="PRO" id="PR:Q503M4"/>
<dbReference type="Proteomes" id="UP000000437">
    <property type="component" value="Unplaced"/>
</dbReference>
<dbReference type="GO" id="GO:0016323">
    <property type="term" value="C:basolateral plasma membrane"/>
    <property type="evidence" value="ECO:0000250"/>
    <property type="project" value="UniProtKB"/>
</dbReference>
<dbReference type="GO" id="GO:0005886">
    <property type="term" value="C:plasma membrane"/>
    <property type="evidence" value="ECO:0000250"/>
    <property type="project" value="UniProtKB"/>
</dbReference>
<dbReference type="GO" id="GO:0005308">
    <property type="term" value="F:creatine transmembrane transporter activity"/>
    <property type="evidence" value="ECO:0000250"/>
    <property type="project" value="UniProtKB"/>
</dbReference>
<dbReference type="GO" id="GO:0022857">
    <property type="term" value="F:transmembrane transporter activity"/>
    <property type="evidence" value="ECO:0000318"/>
    <property type="project" value="GO_Central"/>
</dbReference>
<dbReference type="GO" id="GO:0015292">
    <property type="term" value="F:uniporter activity"/>
    <property type="evidence" value="ECO:0000250"/>
    <property type="project" value="UniProtKB"/>
</dbReference>
<dbReference type="GO" id="GO:0015881">
    <property type="term" value="P:creatine transmembrane transport"/>
    <property type="evidence" value="ECO:0000250"/>
    <property type="project" value="UniProtKB"/>
</dbReference>
<dbReference type="GO" id="GO:0046449">
    <property type="term" value="P:creatinine metabolic process"/>
    <property type="evidence" value="ECO:0000250"/>
    <property type="project" value="UniProtKB"/>
</dbReference>
<dbReference type="CDD" id="cd17424">
    <property type="entry name" value="MFS_MCT12"/>
    <property type="match status" value="1"/>
</dbReference>
<dbReference type="FunFam" id="1.20.1250.20:FF:000751">
    <property type="entry name" value="Monocarboxylate transporter 12-B"/>
    <property type="match status" value="1"/>
</dbReference>
<dbReference type="Gene3D" id="1.20.1250.20">
    <property type="entry name" value="MFS general substrate transporter like domains"/>
    <property type="match status" value="1"/>
</dbReference>
<dbReference type="InterPro" id="IPR011701">
    <property type="entry name" value="MFS"/>
</dbReference>
<dbReference type="InterPro" id="IPR020846">
    <property type="entry name" value="MFS_dom"/>
</dbReference>
<dbReference type="InterPro" id="IPR036259">
    <property type="entry name" value="MFS_trans_sf"/>
</dbReference>
<dbReference type="InterPro" id="IPR050327">
    <property type="entry name" value="Proton-linked_MCT"/>
</dbReference>
<dbReference type="PANTHER" id="PTHR11360">
    <property type="entry name" value="MONOCARBOXYLATE TRANSPORTER"/>
    <property type="match status" value="1"/>
</dbReference>
<dbReference type="PANTHER" id="PTHR11360:SF318">
    <property type="entry name" value="MONOCARBOXYLATE TRANSPORTER 12"/>
    <property type="match status" value="1"/>
</dbReference>
<dbReference type="Pfam" id="PF07690">
    <property type="entry name" value="MFS_1"/>
    <property type="match status" value="1"/>
</dbReference>
<dbReference type="SUPFAM" id="SSF103473">
    <property type="entry name" value="MFS general substrate transporter"/>
    <property type="match status" value="1"/>
</dbReference>
<dbReference type="PROSITE" id="PS50850">
    <property type="entry name" value="MFS"/>
    <property type="match status" value="1"/>
</dbReference>
<gene>
    <name type="primary">slc16a12b</name>
    <name type="synonym">slc16a12</name>
    <name type="ORF">zgc:110441</name>
</gene>